<comment type="function">
    <text evidence="3">Required for 3' polyadenylation of the 5.8S and 25S rRNAs as a prelude to their degradation in the exosome. Involved in the nucleolar organization to ensure faithful chromosome segregation during mitosis.</text>
</comment>
<comment type="catalytic activity">
    <reaction evidence="8">
        <text>RNA(n) + ATP = RNA(n)-3'-adenine ribonucleotide + diphosphate</text>
        <dbReference type="Rhea" id="RHEA:11332"/>
        <dbReference type="Rhea" id="RHEA-COMP:14527"/>
        <dbReference type="Rhea" id="RHEA-COMP:17347"/>
        <dbReference type="ChEBI" id="CHEBI:30616"/>
        <dbReference type="ChEBI" id="CHEBI:33019"/>
        <dbReference type="ChEBI" id="CHEBI:140395"/>
        <dbReference type="ChEBI" id="CHEBI:173115"/>
        <dbReference type="EC" id="2.7.7.19"/>
    </reaction>
    <physiologicalReaction direction="left-to-right" evidence="8">
        <dbReference type="Rhea" id="RHEA:11333"/>
    </physiologicalReaction>
</comment>
<comment type="cofactor">
    <cofactor evidence="1">
        <name>Mg(2+)</name>
        <dbReference type="ChEBI" id="CHEBI:18420"/>
    </cofactor>
    <cofactor evidence="1">
        <name>Mn(2+)</name>
        <dbReference type="ChEBI" id="CHEBI:29035"/>
    </cofactor>
</comment>
<comment type="subunit">
    <text evidence="3 5 6">Heterooligomer (PubMed:16478992). Component of the TRAMP complex composed of at least cid14, mtr4, and air1 (PubMed:17512405, PubMed:20403971).</text>
</comment>
<comment type="subcellular location">
    <subcellularLocation>
        <location evidence="3 4">Nucleus</location>
        <location evidence="3 4">Nucleolus</location>
    </subcellularLocation>
</comment>
<comment type="similarity">
    <text evidence="7">Belongs to the DNA polymerase type-B-like family.</text>
</comment>
<proteinExistence type="evidence at protein level"/>
<gene>
    <name type="primary">cid14</name>
    <name type="ORF">SPAC12G12.13c</name>
</gene>
<protein>
    <recommendedName>
        <fullName>Poly(A) RNA polymerase cid14</fullName>
        <shortName>PAP</shortName>
        <ecNumber evidence="8">2.7.7.19</ecNumber>
    </recommendedName>
    <alternativeName>
        <fullName>Caffeine-induced death protein 14</fullName>
    </alternativeName>
    <alternativeName>
        <fullName>Polynucleotide adenylyltransferase cid14</fullName>
    </alternativeName>
</protein>
<name>CID14_SCHPO</name>
<keyword id="KW-0067">ATP-binding</keyword>
<keyword id="KW-0460">Magnesium</keyword>
<keyword id="KW-0464">Manganese</keyword>
<keyword id="KW-0479">Metal-binding</keyword>
<keyword id="KW-0507">mRNA processing</keyword>
<keyword id="KW-0547">Nucleotide-binding</keyword>
<keyword id="KW-0548">Nucleotidyltransferase</keyword>
<keyword id="KW-0539">Nucleus</keyword>
<keyword id="KW-1185">Reference proteome</keyword>
<keyword id="KW-0694">RNA-binding</keyword>
<keyword id="KW-0808">Transferase</keyword>
<organism>
    <name type="scientific">Schizosaccharomyces pombe (strain 972 / ATCC 24843)</name>
    <name type="common">Fission yeast</name>
    <dbReference type="NCBI Taxonomy" id="284812"/>
    <lineage>
        <taxon>Eukaryota</taxon>
        <taxon>Fungi</taxon>
        <taxon>Dikarya</taxon>
        <taxon>Ascomycota</taxon>
        <taxon>Taphrinomycotina</taxon>
        <taxon>Schizosaccharomycetes</taxon>
        <taxon>Schizosaccharomycetales</taxon>
        <taxon>Schizosaccharomycetaceae</taxon>
        <taxon>Schizosaccharomyces</taxon>
    </lineage>
</organism>
<dbReference type="EC" id="2.7.7.19" evidence="8"/>
<dbReference type="EMBL" id="CU329670">
    <property type="protein sequence ID" value="CAI79317.1"/>
    <property type="molecule type" value="Genomic_DNA"/>
</dbReference>
<dbReference type="PIR" id="S62544">
    <property type="entry name" value="S62544"/>
</dbReference>
<dbReference type="RefSeq" id="NP_001018181.1">
    <property type="nucleotide sequence ID" value="NM_001018285.2"/>
</dbReference>
<dbReference type="SMR" id="Q9UTN3"/>
<dbReference type="BioGRID" id="280460">
    <property type="interactions" value="153"/>
</dbReference>
<dbReference type="FunCoup" id="Q9UTN3">
    <property type="interactions" value="261"/>
</dbReference>
<dbReference type="STRING" id="284812.Q9UTN3"/>
<dbReference type="iPTMnet" id="Q9UTN3"/>
<dbReference type="PaxDb" id="4896-SPAC12G12.13c.1"/>
<dbReference type="EnsemblFungi" id="SPAC12G12.13c.1">
    <property type="protein sequence ID" value="SPAC12G12.13c.1:pep"/>
    <property type="gene ID" value="SPAC12G12.13c"/>
</dbReference>
<dbReference type="GeneID" id="3361384"/>
<dbReference type="KEGG" id="spo:3361384"/>
<dbReference type="PomBase" id="SPAC12G12.13c">
    <property type="gene designation" value="cid14"/>
</dbReference>
<dbReference type="VEuPathDB" id="FungiDB:SPAC12G12.13c"/>
<dbReference type="eggNOG" id="KOG1906">
    <property type="taxonomic scope" value="Eukaryota"/>
</dbReference>
<dbReference type="HOGENOM" id="CLU_013572_4_0_1"/>
<dbReference type="InParanoid" id="Q9UTN3"/>
<dbReference type="OMA" id="VHNGGFY"/>
<dbReference type="PhylomeDB" id="Q9UTN3"/>
<dbReference type="BRENDA" id="2.7.7.19">
    <property type="organism ID" value="5613"/>
</dbReference>
<dbReference type="PRO" id="PR:Q9UTN3"/>
<dbReference type="Proteomes" id="UP000002485">
    <property type="component" value="Chromosome I"/>
</dbReference>
<dbReference type="GO" id="GO:0005730">
    <property type="term" value="C:nucleolus"/>
    <property type="evidence" value="ECO:0000314"/>
    <property type="project" value="PomBase"/>
</dbReference>
<dbReference type="GO" id="GO:0005634">
    <property type="term" value="C:nucleus"/>
    <property type="evidence" value="ECO:0000314"/>
    <property type="project" value="PomBase"/>
</dbReference>
<dbReference type="GO" id="GO:0031499">
    <property type="term" value="C:TRAMP complex"/>
    <property type="evidence" value="ECO:0000314"/>
    <property type="project" value="PomBase"/>
</dbReference>
<dbReference type="GO" id="GO:0005524">
    <property type="term" value="F:ATP binding"/>
    <property type="evidence" value="ECO:0007669"/>
    <property type="project" value="UniProtKB-KW"/>
</dbReference>
<dbReference type="GO" id="GO:0046872">
    <property type="term" value="F:metal ion binding"/>
    <property type="evidence" value="ECO:0007669"/>
    <property type="project" value="UniProtKB-KW"/>
</dbReference>
<dbReference type="GO" id="GO:1990817">
    <property type="term" value="F:poly(A) RNA polymerase activity"/>
    <property type="evidence" value="ECO:0000314"/>
    <property type="project" value="PomBase"/>
</dbReference>
<dbReference type="GO" id="GO:0043023">
    <property type="term" value="F:ribosomal large subunit binding"/>
    <property type="evidence" value="ECO:0000314"/>
    <property type="project" value="PomBase"/>
</dbReference>
<dbReference type="GO" id="GO:0003723">
    <property type="term" value="F:RNA binding"/>
    <property type="evidence" value="ECO:0007669"/>
    <property type="project" value="UniProtKB-KW"/>
</dbReference>
<dbReference type="GO" id="GO:0006397">
    <property type="term" value="P:mRNA processing"/>
    <property type="evidence" value="ECO:0007669"/>
    <property type="project" value="UniProtKB-KW"/>
</dbReference>
<dbReference type="GO" id="GO:0071040">
    <property type="term" value="P:nuclear polyadenylation-dependent antisense transcript catabolic process"/>
    <property type="evidence" value="ECO:0000269"/>
    <property type="project" value="PomBase"/>
</dbReference>
<dbReference type="GO" id="GO:0071035">
    <property type="term" value="P:nuclear polyadenylation-dependent rRNA catabolic process"/>
    <property type="evidence" value="ECO:0000315"/>
    <property type="project" value="PomBase"/>
</dbReference>
<dbReference type="GO" id="GO:0043634">
    <property type="term" value="P:polyadenylation-dependent ncRNA catabolic process"/>
    <property type="evidence" value="ECO:0000315"/>
    <property type="project" value="PomBase"/>
</dbReference>
<dbReference type="GO" id="GO:1990431">
    <property type="term" value="P:priRNA 3'-end processing"/>
    <property type="evidence" value="ECO:0000315"/>
    <property type="project" value="PomBase"/>
</dbReference>
<dbReference type="GO" id="GO:0031123">
    <property type="term" value="P:RNA 3'-end processing"/>
    <property type="evidence" value="ECO:0000318"/>
    <property type="project" value="GO_Central"/>
</dbReference>
<dbReference type="GO" id="GO:0140746">
    <property type="term" value="P:siRNA catabolic process"/>
    <property type="evidence" value="ECO:0000315"/>
    <property type="project" value="PomBase"/>
</dbReference>
<dbReference type="GO" id="GO:0016077">
    <property type="term" value="P:sno(s)RNA catabolic process"/>
    <property type="evidence" value="ECO:0000266"/>
    <property type="project" value="PomBase"/>
</dbReference>
<dbReference type="GO" id="GO:0071038">
    <property type="term" value="P:TRAMP-dependent tRNA surveillance pathway"/>
    <property type="evidence" value="ECO:0000266"/>
    <property type="project" value="PomBase"/>
</dbReference>
<dbReference type="GO" id="GO:0034475">
    <property type="term" value="P:U4 snRNA 3'-end processing"/>
    <property type="evidence" value="ECO:0000266"/>
    <property type="project" value="PomBase"/>
</dbReference>
<dbReference type="CDD" id="cd05402">
    <property type="entry name" value="NT_PAP_TUTase"/>
    <property type="match status" value="1"/>
</dbReference>
<dbReference type="FunFam" id="3.30.460.10:FF:000006">
    <property type="entry name" value="non-canonical poly(A) RNA polymerase PAPD5"/>
    <property type="match status" value="1"/>
</dbReference>
<dbReference type="FunFam" id="1.10.1410.10:FF:000003">
    <property type="entry name" value="non-canonical poly(A) RNA polymerase PAPD7"/>
    <property type="match status" value="1"/>
</dbReference>
<dbReference type="Gene3D" id="1.10.1410.10">
    <property type="match status" value="1"/>
</dbReference>
<dbReference type="Gene3D" id="3.30.460.10">
    <property type="entry name" value="Beta Polymerase, domain 2"/>
    <property type="match status" value="1"/>
</dbReference>
<dbReference type="InterPro" id="IPR054708">
    <property type="entry name" value="MTPAP-like_central"/>
</dbReference>
<dbReference type="InterPro" id="IPR043519">
    <property type="entry name" value="NT_sf"/>
</dbReference>
<dbReference type="InterPro" id="IPR002058">
    <property type="entry name" value="PAP_assoc"/>
</dbReference>
<dbReference type="InterPro" id="IPR045862">
    <property type="entry name" value="Trf4-like"/>
</dbReference>
<dbReference type="PANTHER" id="PTHR23092:SF15">
    <property type="entry name" value="INACTIVE NON-CANONICAL POLY(A) RNA POLYMERASE PROTEIN TRF4-2-RELATED"/>
    <property type="match status" value="1"/>
</dbReference>
<dbReference type="PANTHER" id="PTHR23092">
    <property type="entry name" value="POLY(A) RNA POLYMERASE"/>
    <property type="match status" value="1"/>
</dbReference>
<dbReference type="Pfam" id="PF22600">
    <property type="entry name" value="MTPAP-like_central"/>
    <property type="match status" value="1"/>
</dbReference>
<dbReference type="Pfam" id="PF03828">
    <property type="entry name" value="PAP_assoc"/>
    <property type="match status" value="1"/>
</dbReference>
<dbReference type="SUPFAM" id="SSF81301">
    <property type="entry name" value="Nucleotidyltransferase"/>
    <property type="match status" value="1"/>
</dbReference>
<dbReference type="SUPFAM" id="SSF81631">
    <property type="entry name" value="PAP/OAS1 substrate-binding domain"/>
    <property type="match status" value="1"/>
</dbReference>
<reference key="1">
    <citation type="journal article" date="2002" name="Nature">
        <title>The genome sequence of Schizosaccharomyces pombe.</title>
        <authorList>
            <person name="Wood V."/>
            <person name="Gwilliam R."/>
            <person name="Rajandream M.A."/>
            <person name="Lyne M.H."/>
            <person name="Lyne R."/>
            <person name="Stewart A."/>
            <person name="Sgouros J.G."/>
            <person name="Peat N."/>
            <person name="Hayles J."/>
            <person name="Baker S.G."/>
            <person name="Basham D."/>
            <person name="Bowman S."/>
            <person name="Brooks K."/>
            <person name="Brown D."/>
            <person name="Brown S."/>
            <person name="Chillingworth T."/>
            <person name="Churcher C.M."/>
            <person name="Collins M."/>
            <person name="Connor R."/>
            <person name="Cronin A."/>
            <person name="Davis P."/>
            <person name="Feltwell T."/>
            <person name="Fraser A."/>
            <person name="Gentles S."/>
            <person name="Goble A."/>
            <person name="Hamlin N."/>
            <person name="Harris D.E."/>
            <person name="Hidalgo J."/>
            <person name="Hodgson G."/>
            <person name="Holroyd S."/>
            <person name="Hornsby T."/>
            <person name="Howarth S."/>
            <person name="Huckle E.J."/>
            <person name="Hunt S."/>
            <person name="Jagels K."/>
            <person name="James K.D."/>
            <person name="Jones L."/>
            <person name="Jones M."/>
            <person name="Leather S."/>
            <person name="McDonald S."/>
            <person name="McLean J."/>
            <person name="Mooney P."/>
            <person name="Moule S."/>
            <person name="Mungall K.L."/>
            <person name="Murphy L.D."/>
            <person name="Niblett D."/>
            <person name="Odell C."/>
            <person name="Oliver K."/>
            <person name="O'Neil S."/>
            <person name="Pearson D."/>
            <person name="Quail M.A."/>
            <person name="Rabbinowitsch E."/>
            <person name="Rutherford K.M."/>
            <person name="Rutter S."/>
            <person name="Saunders D."/>
            <person name="Seeger K."/>
            <person name="Sharp S."/>
            <person name="Skelton J."/>
            <person name="Simmonds M.N."/>
            <person name="Squares R."/>
            <person name="Squares S."/>
            <person name="Stevens K."/>
            <person name="Taylor K."/>
            <person name="Taylor R.G."/>
            <person name="Tivey A."/>
            <person name="Walsh S.V."/>
            <person name="Warren T."/>
            <person name="Whitehead S."/>
            <person name="Woodward J.R."/>
            <person name="Volckaert G."/>
            <person name="Aert R."/>
            <person name="Robben J."/>
            <person name="Grymonprez B."/>
            <person name="Weltjens I."/>
            <person name="Vanstreels E."/>
            <person name="Rieger M."/>
            <person name="Schaefer M."/>
            <person name="Mueller-Auer S."/>
            <person name="Gabel C."/>
            <person name="Fuchs M."/>
            <person name="Duesterhoeft A."/>
            <person name="Fritzc C."/>
            <person name="Holzer E."/>
            <person name="Moestl D."/>
            <person name="Hilbert H."/>
            <person name="Borzym K."/>
            <person name="Langer I."/>
            <person name="Beck A."/>
            <person name="Lehrach H."/>
            <person name="Reinhardt R."/>
            <person name="Pohl T.M."/>
            <person name="Eger P."/>
            <person name="Zimmermann W."/>
            <person name="Wedler H."/>
            <person name="Wambutt R."/>
            <person name="Purnelle B."/>
            <person name="Goffeau A."/>
            <person name="Cadieu E."/>
            <person name="Dreano S."/>
            <person name="Gloux S."/>
            <person name="Lelaure V."/>
            <person name="Mottier S."/>
            <person name="Galibert F."/>
            <person name="Aves S.J."/>
            <person name="Xiang Z."/>
            <person name="Hunt C."/>
            <person name="Moore K."/>
            <person name="Hurst S.M."/>
            <person name="Lucas M."/>
            <person name="Rochet M."/>
            <person name="Gaillardin C."/>
            <person name="Tallada V.A."/>
            <person name="Garzon A."/>
            <person name="Thode G."/>
            <person name="Daga R.R."/>
            <person name="Cruzado L."/>
            <person name="Jimenez J."/>
            <person name="Sanchez M."/>
            <person name="del Rey F."/>
            <person name="Benito J."/>
            <person name="Dominguez A."/>
            <person name="Revuelta J.L."/>
            <person name="Moreno S."/>
            <person name="Armstrong J."/>
            <person name="Forsburg S.L."/>
            <person name="Cerutti L."/>
            <person name="Lowe T."/>
            <person name="McCombie W.R."/>
            <person name="Paulsen I."/>
            <person name="Potashkin J."/>
            <person name="Shpakovski G.V."/>
            <person name="Ussery D."/>
            <person name="Barrell B.G."/>
            <person name="Nurse P."/>
        </authorList>
    </citation>
    <scope>NUCLEOTIDE SEQUENCE [LARGE SCALE GENOMIC DNA]</scope>
    <source>
        <strain>972 / ATCC 24843</strain>
    </source>
</reference>
<reference key="2">
    <citation type="journal article" date="2006" name="Mol. Cell. Biol.">
        <title>Requirement of fission yeast Cid14 in polyadenylation of rRNAs.</title>
        <authorList>
            <person name="Win T.Z."/>
            <person name="Draper S."/>
            <person name="Read R.L."/>
            <person name="Pearce J."/>
            <person name="Norbury C.J."/>
            <person name="Wang S.-W."/>
        </authorList>
    </citation>
    <scope>FUNCTION</scope>
    <scope>CATALYTIC ACTIVITY</scope>
    <scope>SUBUNIT</scope>
    <scope>SUBCELLULAR LOCATION</scope>
</reference>
<reference key="3">
    <citation type="journal article" date="2006" name="Nat. Biotechnol.">
        <title>ORFeome cloning and global analysis of protein localization in the fission yeast Schizosaccharomyces pombe.</title>
        <authorList>
            <person name="Matsuyama A."/>
            <person name="Arai R."/>
            <person name="Yashiroda Y."/>
            <person name="Shirai A."/>
            <person name="Kamata A."/>
            <person name="Sekido S."/>
            <person name="Kobayashi Y."/>
            <person name="Hashimoto A."/>
            <person name="Hamamoto M."/>
            <person name="Hiraoka Y."/>
            <person name="Horinouchi S."/>
            <person name="Yoshida M."/>
        </authorList>
    </citation>
    <scope>SUBCELLULAR LOCATION [LARGE SCALE ANALYSIS]</scope>
</reference>
<reference key="4">
    <citation type="journal article" date="2007" name="Cell">
        <title>RNAi-dependent and -independent RNA turnover mechanisms contribute to heterochromatic gene silencing.</title>
        <authorList>
            <person name="Buehler M."/>
            <person name="Haas W."/>
            <person name="Gygi S.P."/>
            <person name="Moazed D."/>
        </authorList>
    </citation>
    <scope>INTERACTION WITH AIR1</scope>
</reference>
<reference key="5">
    <citation type="journal article" date="2010" name="RNA">
        <title>Proteomic and functional analysis of the noncanonical poly(A) polymerase Cid14.</title>
        <authorList>
            <person name="Keller C."/>
            <person name="Woolcock K."/>
            <person name="Hess D."/>
            <person name="Buehler M."/>
        </authorList>
    </citation>
    <scope>IDENTIFICATION IN THE TRAMP COMPLEX</scope>
    <scope>IDENTIFICATION BY MASS SPECTROMETRY</scope>
</reference>
<feature type="chain" id="PRO_0000089746" description="Poly(A) RNA polymerase cid14">
    <location>
        <begin position="1"/>
        <end position="684"/>
    </location>
</feature>
<feature type="domain" description="PAP-associated">
    <location>
        <begin position="434"/>
        <end position="492"/>
    </location>
</feature>
<feature type="region of interest" description="Disordered" evidence="2">
    <location>
        <begin position="1"/>
        <end position="52"/>
    </location>
</feature>
<feature type="region of interest" description="Disordered" evidence="2">
    <location>
        <begin position="64"/>
        <end position="127"/>
    </location>
</feature>
<feature type="region of interest" description="Disordered" evidence="2">
    <location>
        <begin position="161"/>
        <end position="219"/>
    </location>
</feature>
<feature type="region of interest" description="Disordered" evidence="2">
    <location>
        <begin position="623"/>
        <end position="684"/>
    </location>
</feature>
<feature type="compositionally biased region" description="Basic and acidic residues" evidence="2">
    <location>
        <begin position="19"/>
        <end position="35"/>
    </location>
</feature>
<feature type="compositionally biased region" description="Basic and acidic residues" evidence="2">
    <location>
        <begin position="73"/>
        <end position="91"/>
    </location>
</feature>
<feature type="compositionally biased region" description="Basic and acidic residues" evidence="2">
    <location>
        <begin position="108"/>
        <end position="127"/>
    </location>
</feature>
<feature type="compositionally biased region" description="Basic and acidic residues" evidence="2">
    <location>
        <begin position="171"/>
        <end position="186"/>
    </location>
</feature>
<feature type="compositionally biased region" description="Basic and acidic residues" evidence="2">
    <location>
        <begin position="199"/>
        <end position="210"/>
    </location>
</feature>
<feature type="compositionally biased region" description="Polar residues" evidence="2">
    <location>
        <begin position="628"/>
        <end position="655"/>
    </location>
</feature>
<feature type="compositionally biased region" description="Acidic residues" evidence="2">
    <location>
        <begin position="656"/>
        <end position="672"/>
    </location>
</feature>
<feature type="binding site" evidence="1">
    <location>
        <position position="298"/>
    </location>
    <ligand>
        <name>Mg(2+)</name>
        <dbReference type="ChEBI" id="CHEBI:18420"/>
        <note>catalytic</note>
    </ligand>
</feature>
<feature type="binding site" evidence="1">
    <location>
        <position position="300"/>
    </location>
    <ligand>
        <name>Mg(2+)</name>
        <dbReference type="ChEBI" id="CHEBI:18420"/>
        <note>catalytic</note>
    </ligand>
</feature>
<feature type="binding site" evidence="1">
    <location>
        <position position="364"/>
    </location>
    <ligand>
        <name>ATP</name>
        <dbReference type="ChEBI" id="CHEBI:30616"/>
    </ligand>
</feature>
<feature type="binding site" evidence="1">
    <location>
        <position position="389"/>
    </location>
    <ligand>
        <name>ATP</name>
        <dbReference type="ChEBI" id="CHEBI:30616"/>
    </ligand>
</feature>
<feature type="binding site" evidence="1">
    <location>
        <position position="407"/>
    </location>
    <ligand>
        <name>ATP</name>
        <dbReference type="ChEBI" id="CHEBI:30616"/>
    </ligand>
</feature>
<feature type="binding site" evidence="1">
    <location>
        <position position="408"/>
    </location>
    <ligand>
        <name>ATP</name>
        <dbReference type="ChEBI" id="CHEBI:30616"/>
    </ligand>
</feature>
<feature type="binding site" evidence="1">
    <location>
        <position position="492"/>
    </location>
    <ligand>
        <name>ATP</name>
        <dbReference type="ChEBI" id="CHEBI:30616"/>
    </ligand>
</feature>
<feature type="binding site" evidence="1">
    <location>
        <position position="496"/>
    </location>
    <ligand>
        <name>ATP</name>
        <dbReference type="ChEBI" id="CHEBI:30616"/>
    </ligand>
</feature>
<evidence type="ECO:0000250" key="1">
    <source>
        <dbReference type="UniProtKB" id="O13833"/>
    </source>
</evidence>
<evidence type="ECO:0000256" key="2">
    <source>
        <dbReference type="SAM" id="MobiDB-lite"/>
    </source>
</evidence>
<evidence type="ECO:0000269" key="3">
    <source>
    </source>
</evidence>
<evidence type="ECO:0000269" key="4">
    <source>
    </source>
</evidence>
<evidence type="ECO:0000269" key="5">
    <source>
    </source>
</evidence>
<evidence type="ECO:0000269" key="6">
    <source>
    </source>
</evidence>
<evidence type="ECO:0000305" key="7"/>
<evidence type="ECO:0000305" key="8">
    <source>
    </source>
</evidence>
<sequence>MGKKSVSFNRNNYKKRKNERTEPLPRRIFKNDKPSKFKSKRKEKDKNSDAYDEMLLNNNFTLLDQEEPMVEIGSKKSRNDNDSEGIRDKGGVEISNKNDPYIQFGKADPLEPLEKPDLPEEAIKRGEPTILLGIPKREGRKTNPVHDKAVENNSDFIKFDWNSDEDEDSVSNDKSKNNESLKKSSKNEIPGFMRQRGRFFHEANEKSDSNRKRKRQAYELDSQSCPWHRQYKVEREVSRIFHQDILHFIDYITPTPEEHAVRKTLVSRINQAVLQKWPDVSLYVFGSFETKLYLPTSDLDLVIISPEHHYRGTKKDMFVLAHHLKKLKLASEVQVITTANVPIIKFVDPLTKVHVDISFNQPGGLKTCLVVNGFMKKYPALRPLVIIIKHFLNMRALNEVFLGGLSSYAIVCLVVSFLQLHPRLSTGSMREEDNFGVLLLEFLELYGKQFYYDAVGIAVHNGGFYFSKKKMGWLKPNQPYLLSIQDPVDFQNDVSKSSRGLLRVKATFANGFDLLTSKLYALASRIEREGVNRVKDFPSILSTILSVDEGVRQHREHMLKCYKNNPVPLEPLVEVDALASIDVDKLPLQDVGLQYVEDESDSDETDAAKDDLFKVNESIETNGHENFQKQALTSTGEQSSSNSRANPSKLFNISSDDSEDEVPIIEDTTASDEESRAKKIRKRF</sequence>
<accession>Q9UTN3</accession>
<accession>Q09876</accession>
<accession>Q565C4</accession>